<reference key="1">
    <citation type="journal article" date="1993" name="Gene">
        <title>Structure of the gene encoding rat neutrophil chemo-attractant Gro.</title>
        <authorList>
            <person name="Konishi K."/>
            <person name="Tanaka Y."/>
            <person name="Yamamoto M."/>
            <person name="Yomogida K."/>
            <person name="Watanabe K."/>
            <person name="Tsurufuji S."/>
            <person name="Fujioka M."/>
        </authorList>
    </citation>
    <scope>NUCLEOTIDE SEQUENCE [GENOMIC DNA / MRNA]</scope>
</reference>
<reference key="2">
    <citation type="journal article" date="1992" name="Biochem. Biophys. Res. Commun.">
        <title>Rat KC cDNA cloning and mRNA expression in lung macrophages and fibroblasts.</title>
        <authorList>
            <person name="Huang S."/>
            <person name="Paulauskis J.D."/>
            <person name="Kobzik L."/>
        </authorList>
    </citation>
    <scope>NUCLEOTIDE SEQUENCE [MRNA]</scope>
</reference>
<reference key="3">
    <citation type="journal article" date="1989" name="J. Biol. Chem.">
        <title>The neutrophil chemoattractant produced by the rat kidney epithelioid cell line NRK-52E is a protein related to the KC/gro protein.</title>
        <authorList>
            <person name="Watanabe K."/>
            <person name="Konishi K."/>
            <person name="Fujioka M."/>
            <person name="Kinoshita S."/>
            <person name="Nakagawa H."/>
        </authorList>
    </citation>
    <scope>PROTEIN SEQUENCE OF 25-96</scope>
</reference>
<reference key="4">
    <citation type="journal article" date="1996" name="Biochem. Biophys. Res. Commun.">
        <title>Cytokine-induced neutrophil chemoattractant (CINC)-2 alpha, a novel member of rat GRO/CINCs, is a predominant chemokine produced by lipopolysaccharide-stimulated rat macrophages in culture.</title>
        <authorList>
            <person name="Nakagawa H."/>
            <person name="Shiota S."/>
            <person name="Takano K."/>
            <person name="Shibata F."/>
            <person name="Kato H."/>
        </authorList>
    </citation>
    <scope>PROTEIN SEQUENCE OF 25-56</scope>
    <source>
        <strain>Wistar</strain>
    </source>
</reference>
<reference key="5">
    <citation type="journal article" date="1992" name="Am. J. Pathol.">
        <title>Expression of macrophage inflammatory protein-2 and KC mRNA in pulmonary inflammation.</title>
        <authorList>
            <person name="Huang S."/>
            <person name="Paulauskis J.D."/>
            <person name="Godleski J.J."/>
            <person name="Kobzik L."/>
        </authorList>
    </citation>
    <scope>NUCLEOTIDE SEQUENCE [MRNA] OF 36-88</scope>
    <source>
        <tissue>Lung</tissue>
    </source>
</reference>
<reference key="6">
    <citation type="journal article" date="1994" name="FEBS Lett.">
        <title>The three dimensional structure of rat cytokine CINC/Gro in solution by homonuclear 3D NMR.</title>
        <authorList>
            <person name="Hanzawa H."/>
            <person name="Haruyama H."/>
            <person name="Watanabe K."/>
            <person name="Tsurufuji S."/>
        </authorList>
    </citation>
    <scope>STRUCTURE BY NMR</scope>
</reference>
<reference key="7">
    <citation type="journal article" date="1997" name="J. Biochem.">
        <title>Subunit association and monomer structure of CINC/Gro revealed by 1H-NMR.</title>
        <authorList>
            <person name="Hanzawa H."/>
            <person name="Haruyama H."/>
            <person name="Konishi K."/>
            <person name="Watanabe K."/>
            <person name="Tsurufuji S."/>
        </authorList>
    </citation>
    <scope>STRUCTURE BY NMR</scope>
</reference>
<reference key="8">
    <citation type="journal article" date="1998" name="J. Biochem.">
        <title>Solution structure of CINC/Gro investigated by heteronuclear NMR.</title>
        <authorList>
            <person name="Hanzawa H."/>
            <person name="Haruyama H."/>
            <person name="Konishi K."/>
            <person name="Watanabe K."/>
            <person name="Tsurufuji S."/>
        </authorList>
    </citation>
    <scope>STRUCTURE BY NMR</scope>
</reference>
<dbReference type="EMBL" id="D11445">
    <property type="protein sequence ID" value="BAA02009.1"/>
    <property type="molecule type" value="Genomic_DNA"/>
</dbReference>
<dbReference type="EMBL" id="D11444">
    <property type="protein sequence ID" value="BAA02008.1"/>
    <property type="molecule type" value="mRNA"/>
</dbReference>
<dbReference type="EMBL" id="M86536">
    <property type="protein sequence ID" value="AAA42053.1"/>
    <property type="molecule type" value="mRNA"/>
</dbReference>
<dbReference type="EMBL" id="S45856">
    <property type="status" value="NOT_ANNOTATED_CDS"/>
    <property type="molecule type" value="mRNA"/>
</dbReference>
<dbReference type="PIR" id="JN0572">
    <property type="entry name" value="JN0572"/>
</dbReference>
<dbReference type="RefSeq" id="NP_110472.1">
    <property type="nucleotide sequence ID" value="NM_030845.1"/>
</dbReference>
<dbReference type="SMR" id="P14095"/>
<dbReference type="FunCoup" id="P14095">
    <property type="interactions" value="482"/>
</dbReference>
<dbReference type="STRING" id="10116.ENSRNOP00000003778"/>
<dbReference type="PaxDb" id="10116-ENSRNOP00000003778"/>
<dbReference type="GeneID" id="81503"/>
<dbReference type="KEGG" id="rno:81503"/>
<dbReference type="UCSC" id="RGD:619869">
    <property type="organism name" value="rat"/>
</dbReference>
<dbReference type="AGR" id="RGD:619869"/>
<dbReference type="CTD" id="2919"/>
<dbReference type="RGD" id="619869">
    <property type="gene designation" value="Cxcl1"/>
</dbReference>
<dbReference type="eggNOG" id="ENOG502S7MM">
    <property type="taxonomic scope" value="Eukaryota"/>
</dbReference>
<dbReference type="InParanoid" id="P14095"/>
<dbReference type="OrthoDB" id="8872899at2759"/>
<dbReference type="PhylomeDB" id="P14095"/>
<dbReference type="Reactome" id="R-RNO-380108">
    <property type="pathway name" value="Chemokine receptors bind chemokines"/>
</dbReference>
<dbReference type="Reactome" id="R-RNO-418594">
    <property type="pathway name" value="G alpha (i) signalling events"/>
</dbReference>
<dbReference type="Reactome" id="R-RNO-6798695">
    <property type="pathway name" value="Neutrophil degranulation"/>
</dbReference>
<dbReference type="PRO" id="PR:P14095"/>
<dbReference type="Proteomes" id="UP000002494">
    <property type="component" value="Unplaced"/>
</dbReference>
<dbReference type="GO" id="GO:0005615">
    <property type="term" value="C:extracellular space"/>
    <property type="evidence" value="ECO:0000314"/>
    <property type="project" value="RGD"/>
</dbReference>
<dbReference type="GO" id="GO:0008009">
    <property type="term" value="F:chemokine activity"/>
    <property type="evidence" value="ECO:0000314"/>
    <property type="project" value="RGD"/>
</dbReference>
<dbReference type="GO" id="GO:0008083">
    <property type="term" value="F:growth factor activity"/>
    <property type="evidence" value="ECO:0007669"/>
    <property type="project" value="UniProtKB-KW"/>
</dbReference>
<dbReference type="GO" id="GO:0097398">
    <property type="term" value="P:cellular response to interleukin-17"/>
    <property type="evidence" value="ECO:0000266"/>
    <property type="project" value="RGD"/>
</dbReference>
<dbReference type="GO" id="GO:0006955">
    <property type="term" value="P:immune response"/>
    <property type="evidence" value="ECO:0007669"/>
    <property type="project" value="InterPro"/>
</dbReference>
<dbReference type="GO" id="GO:0006954">
    <property type="term" value="P:inflammatory response"/>
    <property type="evidence" value="ECO:0007669"/>
    <property type="project" value="UniProtKB-KW"/>
</dbReference>
<dbReference type="GO" id="GO:0030593">
    <property type="term" value="P:neutrophil chemotaxis"/>
    <property type="evidence" value="ECO:0000314"/>
    <property type="project" value="RGD"/>
</dbReference>
<dbReference type="GO" id="GO:0007204">
    <property type="term" value="P:positive regulation of cytosolic calcium ion concentration"/>
    <property type="evidence" value="ECO:0000314"/>
    <property type="project" value="RGD"/>
</dbReference>
<dbReference type="GO" id="GO:1902035">
    <property type="term" value="P:positive regulation of hematopoietic stem cell proliferation"/>
    <property type="evidence" value="ECO:0000266"/>
    <property type="project" value="RGD"/>
</dbReference>
<dbReference type="GO" id="GO:0070965">
    <property type="term" value="P:positive regulation of neutrophil mediated killing of fungus"/>
    <property type="evidence" value="ECO:0000266"/>
    <property type="project" value="RGD"/>
</dbReference>
<dbReference type="GO" id="GO:0043268">
    <property type="term" value="P:positive regulation of potassium ion transport"/>
    <property type="evidence" value="ECO:0000314"/>
    <property type="project" value="RGD"/>
</dbReference>
<dbReference type="GO" id="GO:0010765">
    <property type="term" value="P:positive regulation of sodium ion transport"/>
    <property type="evidence" value="ECO:0000314"/>
    <property type="project" value="RGD"/>
</dbReference>
<dbReference type="GO" id="GO:0032930">
    <property type="term" value="P:positive regulation of superoxide anion generation"/>
    <property type="evidence" value="ECO:0000266"/>
    <property type="project" value="RGD"/>
</dbReference>
<dbReference type="GO" id="GO:0001975">
    <property type="term" value="P:response to amphetamine"/>
    <property type="evidence" value="ECO:0000270"/>
    <property type="project" value="RGD"/>
</dbReference>
<dbReference type="GO" id="GO:0032355">
    <property type="term" value="P:response to estradiol"/>
    <property type="evidence" value="ECO:0000270"/>
    <property type="project" value="RGD"/>
</dbReference>
<dbReference type="GO" id="GO:0010332">
    <property type="term" value="P:response to gamma radiation"/>
    <property type="evidence" value="ECO:0000270"/>
    <property type="project" value="RGD"/>
</dbReference>
<dbReference type="GO" id="GO:0051384">
    <property type="term" value="P:response to glucocorticoid"/>
    <property type="evidence" value="ECO:0000270"/>
    <property type="project" value="RGD"/>
</dbReference>
<dbReference type="GO" id="GO:0032496">
    <property type="term" value="P:response to lipopolysaccharide"/>
    <property type="evidence" value="ECO:0000270"/>
    <property type="project" value="RGD"/>
</dbReference>
<dbReference type="CDD" id="cd00273">
    <property type="entry name" value="Chemokine_CXC"/>
    <property type="match status" value="1"/>
</dbReference>
<dbReference type="FunFam" id="2.40.50.40:FF:000004">
    <property type="entry name" value="C-X-C motif chemokine"/>
    <property type="match status" value="1"/>
</dbReference>
<dbReference type="Gene3D" id="2.40.50.40">
    <property type="match status" value="1"/>
</dbReference>
<dbReference type="InterPro" id="IPR039809">
    <property type="entry name" value="Chemokine_b/g/d"/>
</dbReference>
<dbReference type="InterPro" id="IPR001089">
    <property type="entry name" value="Chemokine_CXC"/>
</dbReference>
<dbReference type="InterPro" id="IPR018048">
    <property type="entry name" value="Chemokine_CXC_CS"/>
</dbReference>
<dbReference type="InterPro" id="IPR001811">
    <property type="entry name" value="Chemokine_IL8-like_dom"/>
</dbReference>
<dbReference type="InterPro" id="IPR033899">
    <property type="entry name" value="CXC_Chemokine_domain"/>
</dbReference>
<dbReference type="InterPro" id="IPR036048">
    <property type="entry name" value="Interleukin_8-like_sf"/>
</dbReference>
<dbReference type="PANTHER" id="PTHR12015:SF192">
    <property type="entry name" value="GROWTH-REGULATED ALPHA PROTEIN"/>
    <property type="match status" value="1"/>
</dbReference>
<dbReference type="PANTHER" id="PTHR12015">
    <property type="entry name" value="SMALL INDUCIBLE CYTOKINE A"/>
    <property type="match status" value="1"/>
</dbReference>
<dbReference type="Pfam" id="PF00048">
    <property type="entry name" value="IL8"/>
    <property type="match status" value="1"/>
</dbReference>
<dbReference type="PRINTS" id="PR00436">
    <property type="entry name" value="INTERLEUKIN8"/>
</dbReference>
<dbReference type="PRINTS" id="PR00437">
    <property type="entry name" value="SMALLCYTKCXC"/>
</dbReference>
<dbReference type="SMART" id="SM00199">
    <property type="entry name" value="SCY"/>
    <property type="match status" value="1"/>
</dbReference>
<dbReference type="SUPFAM" id="SSF54117">
    <property type="entry name" value="Interleukin 8-like chemokines"/>
    <property type="match status" value="1"/>
</dbReference>
<dbReference type="PROSITE" id="PS00471">
    <property type="entry name" value="SMALL_CYTOKINES_CXC"/>
    <property type="match status" value="1"/>
</dbReference>
<name>GROA_RAT</name>
<proteinExistence type="evidence at protein level"/>
<gene>
    <name type="primary">Cxcl1</name>
    <name type="synonym">Cinc1</name>
    <name type="synonym">Gro</name>
    <name type="synonym">Scyb1</name>
</gene>
<comment type="function">
    <text>Has chemotactic activity for neutrophils. Contributes to neutrophil activation during inflammation.</text>
</comment>
<comment type="subunit">
    <text>Monomer and homodimer.</text>
</comment>
<comment type="subcellular location">
    <subcellularLocation>
        <location>Secreted</location>
    </subcellularLocation>
</comment>
<comment type="tissue specificity">
    <text>At least expressed in the lung and trachea.</text>
</comment>
<comment type="induction">
    <text>By lipopolysaccharides (LPS) and inflammation.</text>
</comment>
<comment type="similarity">
    <text evidence="4">Belongs to the intercrine alpha (chemokine CxC) family.</text>
</comment>
<evidence type="ECO:0000250" key="1"/>
<evidence type="ECO:0000269" key="2">
    <source>
    </source>
</evidence>
<evidence type="ECO:0000269" key="3">
    <source>
    </source>
</evidence>
<evidence type="ECO:0000305" key="4"/>
<sequence>MVSATRSLLCAALPVLATSRQATGAPVANELRCQCLQTVAGIHFKNIQSLKVMPPGPHCTQTEVIATLKNGREACLDPEAPMVQKIVQKMLKGVPK</sequence>
<keyword id="KW-0202">Cytokine</keyword>
<keyword id="KW-0903">Direct protein sequencing</keyword>
<keyword id="KW-1015">Disulfide bond</keyword>
<keyword id="KW-0339">Growth factor</keyword>
<keyword id="KW-0395">Inflammatory response</keyword>
<keyword id="KW-1185">Reference proteome</keyword>
<keyword id="KW-0964">Secreted</keyword>
<keyword id="KW-0732">Signal</keyword>
<protein>
    <recommendedName>
        <fullName>Growth-regulated alpha protein</fullName>
    </recommendedName>
    <alternativeName>
        <fullName>C-X-C motif chemokine 1</fullName>
    </alternativeName>
    <alternativeName>
        <fullName>Cytokine-induced neutrophil chemoattractant 1</fullName>
        <shortName>CINC-1</shortName>
    </alternativeName>
    <alternativeName>
        <fullName>Platelet-derived growth factor-inducible protein KC</fullName>
    </alternativeName>
</protein>
<feature type="signal peptide" evidence="2 3">
    <location>
        <begin position="1"/>
        <end position="24"/>
    </location>
</feature>
<feature type="chain" id="PRO_0000005055" description="Growth-regulated alpha protein">
    <location>
        <begin position="25"/>
        <end position="96"/>
    </location>
</feature>
<feature type="disulfide bond" evidence="1">
    <location>
        <begin position="33"/>
        <end position="59"/>
    </location>
</feature>
<feature type="disulfide bond" evidence="1">
    <location>
        <begin position="35"/>
        <end position="75"/>
    </location>
</feature>
<accession>P14095</accession>
<organism>
    <name type="scientific">Rattus norvegicus</name>
    <name type="common">Rat</name>
    <dbReference type="NCBI Taxonomy" id="10116"/>
    <lineage>
        <taxon>Eukaryota</taxon>
        <taxon>Metazoa</taxon>
        <taxon>Chordata</taxon>
        <taxon>Craniata</taxon>
        <taxon>Vertebrata</taxon>
        <taxon>Euteleostomi</taxon>
        <taxon>Mammalia</taxon>
        <taxon>Eutheria</taxon>
        <taxon>Euarchontoglires</taxon>
        <taxon>Glires</taxon>
        <taxon>Rodentia</taxon>
        <taxon>Myomorpha</taxon>
        <taxon>Muroidea</taxon>
        <taxon>Muridae</taxon>
        <taxon>Murinae</taxon>
        <taxon>Rattus</taxon>
    </lineage>
</organism>